<feature type="chain" id="PRO_0000086318" description="Sporulation protein kinase mde3">
    <location>
        <begin position="1"/>
        <end position="559"/>
    </location>
</feature>
<feature type="domain" description="Protein kinase" evidence="1">
    <location>
        <begin position="21"/>
        <end position="323"/>
    </location>
</feature>
<feature type="active site" description="Proton acceptor" evidence="1 2">
    <location>
        <position position="150"/>
    </location>
</feature>
<feature type="binding site" evidence="1">
    <location>
        <begin position="27"/>
        <end position="35"/>
    </location>
    <ligand>
        <name>ATP</name>
        <dbReference type="ChEBI" id="CHEBI:30616"/>
    </ligand>
</feature>
<feature type="binding site" evidence="1">
    <location>
        <position position="53"/>
    </location>
    <ligand>
        <name>ATP</name>
        <dbReference type="ChEBI" id="CHEBI:30616"/>
    </ligand>
</feature>
<feature type="sequence conflict" description="In Ref. 2; BAA21426." evidence="4" ref="2">
    <location>
        <begin position="50"/>
        <end position="74"/>
    </location>
</feature>
<organism>
    <name type="scientific">Schizosaccharomyces pombe (strain 972 / ATCC 24843)</name>
    <name type="common">Fission yeast</name>
    <dbReference type="NCBI Taxonomy" id="284812"/>
    <lineage>
        <taxon>Eukaryota</taxon>
        <taxon>Fungi</taxon>
        <taxon>Dikarya</taxon>
        <taxon>Ascomycota</taxon>
        <taxon>Taphrinomycotina</taxon>
        <taxon>Schizosaccharomycetes</taxon>
        <taxon>Schizosaccharomycetales</taxon>
        <taxon>Schizosaccharomycetaceae</taxon>
        <taxon>Schizosaccharomyces</taxon>
    </lineage>
</organism>
<keyword id="KW-0067">ATP-binding</keyword>
<keyword id="KW-0418">Kinase</keyword>
<keyword id="KW-0547">Nucleotide-binding</keyword>
<keyword id="KW-1185">Reference proteome</keyword>
<keyword id="KW-0723">Serine/threonine-protein kinase</keyword>
<keyword id="KW-0808">Transferase</keyword>
<proteinExistence type="inferred from homology"/>
<dbReference type="EC" id="2.7.11.1"/>
<dbReference type="EMBL" id="AB004537">
    <property type="protein sequence ID" value="BAA21426.1"/>
    <property type="molecule type" value="Genomic_DNA"/>
</dbReference>
<dbReference type="EMBL" id="CU329671">
    <property type="protein sequence ID" value="CAA17834.1"/>
    <property type="molecule type" value="Genomic_DNA"/>
</dbReference>
<dbReference type="PIR" id="T40764">
    <property type="entry name" value="T40764"/>
</dbReference>
<dbReference type="RefSeq" id="NP_595581.1">
    <property type="nucleotide sequence ID" value="NM_001021476.1"/>
</dbReference>
<dbReference type="SMR" id="O43077"/>
<dbReference type="BioGRID" id="277768">
    <property type="interactions" value="9"/>
</dbReference>
<dbReference type="FunCoup" id="O43077">
    <property type="interactions" value="408"/>
</dbReference>
<dbReference type="STRING" id="284812.O43077"/>
<dbReference type="iPTMnet" id="O43077"/>
<dbReference type="PaxDb" id="4896-SPBC8D2.19.1"/>
<dbReference type="EnsemblFungi" id="SPBC8D2.19.1">
    <property type="protein sequence ID" value="SPBC8D2.19.1:pep"/>
    <property type="gene ID" value="SPBC8D2.19"/>
</dbReference>
<dbReference type="GeneID" id="2541254"/>
<dbReference type="KEGG" id="spo:2541254"/>
<dbReference type="PomBase" id="SPBC8D2.19">
    <property type="gene designation" value="mde3"/>
</dbReference>
<dbReference type="VEuPathDB" id="FungiDB:SPBC8D2.19"/>
<dbReference type="eggNOG" id="KOG0661">
    <property type="taxonomic scope" value="Eukaryota"/>
</dbReference>
<dbReference type="HOGENOM" id="CLU_011172_1_0_1"/>
<dbReference type="InParanoid" id="O43077"/>
<dbReference type="OMA" id="MECMEAN"/>
<dbReference type="PhylomeDB" id="O43077"/>
<dbReference type="PRO" id="PR:O43077"/>
<dbReference type="Proteomes" id="UP000002485">
    <property type="component" value="Chromosome II"/>
</dbReference>
<dbReference type="GO" id="GO:0005737">
    <property type="term" value="C:cytoplasm"/>
    <property type="evidence" value="ECO:0000318"/>
    <property type="project" value="GO_Central"/>
</dbReference>
<dbReference type="GO" id="GO:0005634">
    <property type="term" value="C:nucleus"/>
    <property type="evidence" value="ECO:0000318"/>
    <property type="project" value="GO_Central"/>
</dbReference>
<dbReference type="GO" id="GO:0005524">
    <property type="term" value="F:ATP binding"/>
    <property type="evidence" value="ECO:0000255"/>
    <property type="project" value="PomBase"/>
</dbReference>
<dbReference type="GO" id="GO:0106310">
    <property type="term" value="F:protein serine kinase activity"/>
    <property type="evidence" value="ECO:0007669"/>
    <property type="project" value="RHEA"/>
</dbReference>
<dbReference type="GO" id="GO:0004674">
    <property type="term" value="F:protein serine/threonine kinase activity"/>
    <property type="evidence" value="ECO:0000318"/>
    <property type="project" value="GO_Central"/>
</dbReference>
<dbReference type="GO" id="GO:0030437">
    <property type="term" value="P:ascospore formation"/>
    <property type="evidence" value="ECO:0000316"/>
    <property type="project" value="PomBase"/>
</dbReference>
<dbReference type="GO" id="GO:0035556">
    <property type="term" value="P:intracellular signal transduction"/>
    <property type="evidence" value="ECO:0000318"/>
    <property type="project" value="GO_Central"/>
</dbReference>
<dbReference type="CDD" id="cd07830">
    <property type="entry name" value="STKc_MAK_like"/>
    <property type="match status" value="1"/>
</dbReference>
<dbReference type="FunFam" id="1.10.510.10:FF:000624">
    <property type="entry name" value="Mitogen-activated protein kinase"/>
    <property type="match status" value="1"/>
</dbReference>
<dbReference type="FunFam" id="3.30.200.20:FF:001493">
    <property type="entry name" value="Sporulation protein kinase mde3"/>
    <property type="match status" value="1"/>
</dbReference>
<dbReference type="Gene3D" id="3.30.200.20">
    <property type="entry name" value="Phosphorylase Kinase, domain 1"/>
    <property type="match status" value="1"/>
</dbReference>
<dbReference type="Gene3D" id="1.10.510.10">
    <property type="entry name" value="Transferase(Phosphotransferase) domain 1"/>
    <property type="match status" value="1"/>
</dbReference>
<dbReference type="InterPro" id="IPR011009">
    <property type="entry name" value="Kinase-like_dom_sf"/>
</dbReference>
<dbReference type="InterPro" id="IPR050117">
    <property type="entry name" value="MAP_kinase"/>
</dbReference>
<dbReference type="InterPro" id="IPR000719">
    <property type="entry name" value="Prot_kinase_dom"/>
</dbReference>
<dbReference type="InterPro" id="IPR017441">
    <property type="entry name" value="Protein_kinase_ATP_BS"/>
</dbReference>
<dbReference type="InterPro" id="IPR008271">
    <property type="entry name" value="Ser/Thr_kinase_AS"/>
</dbReference>
<dbReference type="PANTHER" id="PTHR24055">
    <property type="entry name" value="MITOGEN-ACTIVATED PROTEIN KINASE"/>
    <property type="match status" value="1"/>
</dbReference>
<dbReference type="Pfam" id="PF00069">
    <property type="entry name" value="Pkinase"/>
    <property type="match status" value="1"/>
</dbReference>
<dbReference type="SMART" id="SM00220">
    <property type="entry name" value="S_TKc"/>
    <property type="match status" value="1"/>
</dbReference>
<dbReference type="SUPFAM" id="SSF56112">
    <property type="entry name" value="Protein kinase-like (PK-like)"/>
    <property type="match status" value="1"/>
</dbReference>
<dbReference type="PROSITE" id="PS00107">
    <property type="entry name" value="PROTEIN_KINASE_ATP"/>
    <property type="match status" value="1"/>
</dbReference>
<dbReference type="PROSITE" id="PS50011">
    <property type="entry name" value="PROTEIN_KINASE_DOM"/>
    <property type="match status" value="1"/>
</dbReference>
<dbReference type="PROSITE" id="PS00108">
    <property type="entry name" value="PROTEIN_KINASE_ST"/>
    <property type="match status" value="1"/>
</dbReference>
<evidence type="ECO:0000255" key="1">
    <source>
        <dbReference type="PROSITE-ProRule" id="PRU00159"/>
    </source>
</evidence>
<evidence type="ECO:0000255" key="2">
    <source>
        <dbReference type="PROSITE-ProRule" id="PRU10027"/>
    </source>
</evidence>
<evidence type="ECO:0000269" key="3">
    <source>
    </source>
</evidence>
<evidence type="ECO:0000305" key="4"/>
<gene>
    <name type="primary">mde3</name>
    <name type="ORF">pi046</name>
    <name type="ORF">SPBC8D2.19</name>
</gene>
<name>MDE3_SCHPO</name>
<accession>O43077</accession>
<accession>O13638</accession>
<sequence>MSNESIYSVLDLTQVIFEDRYLVKQKLGDGSFGTVYLAQRKEKNGLYETVAVKKLKNSSKPKPKHELLKLRESLALRKISKHPCLIDLLETFMDPYRNIFLVMEFMDCNLFQLFKRRQGRLFTKETAFNILLQIISGIEHIHKHGFMHRDIKPENILVKRISPKPISSRYSIKLGDFGLARPSVSSDPLTEYVSTRWYRAPELLLRSGSYNHSVDLYAFGCIVFEIYSLKPLFPGRNETDQLNRVCEILGNPGIDELDTLHYWSQAKELAKRLGFMLPPTKPYPIQKLLPQNCPEGHAKMIPCLLAWNPDVRPTAKYCKEVFFPLPPSASKSNSVPQKISNPKVEQNLGFPISREDKKSTRRVGWLKKNLSEFVSSVKSVFPDSHGSQPHVKTEKPINAKESTGHLANPIASSNVPAISLKPGELHESVFFSENEQIDYLLTSIDYLPSYKPPSNGSNIAINAFNETVGDRIPSSKDILITEKIPFKKENEIRDSIVPSCSQPDESNKEGVASCLLLQKSGMEMTSVLEYSTPNPAEVQNICNDHAKFETSKSLHLSSP</sequence>
<comment type="function">
    <text evidence="3">Protein kinase which is essential for spore formation.</text>
</comment>
<comment type="catalytic activity">
    <reaction>
        <text>L-seryl-[protein] + ATP = O-phospho-L-seryl-[protein] + ADP + H(+)</text>
        <dbReference type="Rhea" id="RHEA:17989"/>
        <dbReference type="Rhea" id="RHEA-COMP:9863"/>
        <dbReference type="Rhea" id="RHEA-COMP:11604"/>
        <dbReference type="ChEBI" id="CHEBI:15378"/>
        <dbReference type="ChEBI" id="CHEBI:29999"/>
        <dbReference type="ChEBI" id="CHEBI:30616"/>
        <dbReference type="ChEBI" id="CHEBI:83421"/>
        <dbReference type="ChEBI" id="CHEBI:456216"/>
        <dbReference type="EC" id="2.7.11.1"/>
    </reaction>
</comment>
<comment type="catalytic activity">
    <reaction>
        <text>L-threonyl-[protein] + ATP = O-phospho-L-threonyl-[protein] + ADP + H(+)</text>
        <dbReference type="Rhea" id="RHEA:46608"/>
        <dbReference type="Rhea" id="RHEA-COMP:11060"/>
        <dbReference type="Rhea" id="RHEA-COMP:11605"/>
        <dbReference type="ChEBI" id="CHEBI:15378"/>
        <dbReference type="ChEBI" id="CHEBI:30013"/>
        <dbReference type="ChEBI" id="CHEBI:30616"/>
        <dbReference type="ChEBI" id="CHEBI:61977"/>
        <dbReference type="ChEBI" id="CHEBI:456216"/>
        <dbReference type="EC" id="2.7.11.1"/>
    </reaction>
</comment>
<comment type="similarity">
    <text evidence="1">Belongs to the protein kinase superfamily. Ser/Thr protein kinase family.</text>
</comment>
<reference key="1">
    <citation type="journal article" date="2000" name="Yeast">
        <title>A 38 kb segment containing the cdc2 gene from the left arm of fission yeast chromosome II: sequence analysis and characterization of the genomic DNA and cDNAs encoded on the segment.</title>
        <authorList>
            <person name="Machida M."/>
            <person name="Yamazaki S."/>
            <person name="Kunihiro S."/>
            <person name="Tanaka T."/>
            <person name="Kushida N."/>
            <person name="Jinno K."/>
            <person name="Haikawa Y."/>
            <person name="Yamazaki J."/>
            <person name="Yamamoto S."/>
            <person name="Sekine M."/>
            <person name="Oguchi A."/>
            <person name="Nagai Y."/>
            <person name="Sakai M."/>
            <person name="Aoki K."/>
            <person name="Ogura K."/>
            <person name="Kudoh Y."/>
            <person name="Kikuchi H."/>
            <person name="Zhang M.Q."/>
            <person name="Yanagida M."/>
        </authorList>
    </citation>
    <scope>NUCLEOTIDE SEQUENCE [LARGE SCALE GENOMIC DNA]</scope>
    <source>
        <strain>972 / ATCC 24843</strain>
    </source>
</reference>
<reference key="2">
    <citation type="journal article" date="2002" name="Nature">
        <title>The genome sequence of Schizosaccharomyces pombe.</title>
        <authorList>
            <person name="Wood V."/>
            <person name="Gwilliam R."/>
            <person name="Rajandream M.A."/>
            <person name="Lyne M.H."/>
            <person name="Lyne R."/>
            <person name="Stewart A."/>
            <person name="Sgouros J.G."/>
            <person name="Peat N."/>
            <person name="Hayles J."/>
            <person name="Baker S.G."/>
            <person name="Basham D."/>
            <person name="Bowman S."/>
            <person name="Brooks K."/>
            <person name="Brown D."/>
            <person name="Brown S."/>
            <person name="Chillingworth T."/>
            <person name="Churcher C.M."/>
            <person name="Collins M."/>
            <person name="Connor R."/>
            <person name="Cronin A."/>
            <person name="Davis P."/>
            <person name="Feltwell T."/>
            <person name="Fraser A."/>
            <person name="Gentles S."/>
            <person name="Goble A."/>
            <person name="Hamlin N."/>
            <person name="Harris D.E."/>
            <person name="Hidalgo J."/>
            <person name="Hodgson G."/>
            <person name="Holroyd S."/>
            <person name="Hornsby T."/>
            <person name="Howarth S."/>
            <person name="Huckle E.J."/>
            <person name="Hunt S."/>
            <person name="Jagels K."/>
            <person name="James K.D."/>
            <person name="Jones L."/>
            <person name="Jones M."/>
            <person name="Leather S."/>
            <person name="McDonald S."/>
            <person name="McLean J."/>
            <person name="Mooney P."/>
            <person name="Moule S."/>
            <person name="Mungall K.L."/>
            <person name="Murphy L.D."/>
            <person name="Niblett D."/>
            <person name="Odell C."/>
            <person name="Oliver K."/>
            <person name="O'Neil S."/>
            <person name="Pearson D."/>
            <person name="Quail M.A."/>
            <person name="Rabbinowitsch E."/>
            <person name="Rutherford K.M."/>
            <person name="Rutter S."/>
            <person name="Saunders D."/>
            <person name="Seeger K."/>
            <person name="Sharp S."/>
            <person name="Skelton J."/>
            <person name="Simmonds M.N."/>
            <person name="Squares R."/>
            <person name="Squares S."/>
            <person name="Stevens K."/>
            <person name="Taylor K."/>
            <person name="Taylor R.G."/>
            <person name="Tivey A."/>
            <person name="Walsh S.V."/>
            <person name="Warren T."/>
            <person name="Whitehead S."/>
            <person name="Woodward J.R."/>
            <person name="Volckaert G."/>
            <person name="Aert R."/>
            <person name="Robben J."/>
            <person name="Grymonprez B."/>
            <person name="Weltjens I."/>
            <person name="Vanstreels E."/>
            <person name="Rieger M."/>
            <person name="Schaefer M."/>
            <person name="Mueller-Auer S."/>
            <person name="Gabel C."/>
            <person name="Fuchs M."/>
            <person name="Duesterhoeft A."/>
            <person name="Fritzc C."/>
            <person name="Holzer E."/>
            <person name="Moestl D."/>
            <person name="Hilbert H."/>
            <person name="Borzym K."/>
            <person name="Langer I."/>
            <person name="Beck A."/>
            <person name="Lehrach H."/>
            <person name="Reinhardt R."/>
            <person name="Pohl T.M."/>
            <person name="Eger P."/>
            <person name="Zimmermann W."/>
            <person name="Wedler H."/>
            <person name="Wambutt R."/>
            <person name="Purnelle B."/>
            <person name="Goffeau A."/>
            <person name="Cadieu E."/>
            <person name="Dreano S."/>
            <person name="Gloux S."/>
            <person name="Lelaure V."/>
            <person name="Mottier S."/>
            <person name="Galibert F."/>
            <person name="Aves S.J."/>
            <person name="Xiang Z."/>
            <person name="Hunt C."/>
            <person name="Moore K."/>
            <person name="Hurst S.M."/>
            <person name="Lucas M."/>
            <person name="Rochet M."/>
            <person name="Gaillardin C."/>
            <person name="Tallada V.A."/>
            <person name="Garzon A."/>
            <person name="Thode G."/>
            <person name="Daga R.R."/>
            <person name="Cruzado L."/>
            <person name="Jimenez J."/>
            <person name="Sanchez M."/>
            <person name="del Rey F."/>
            <person name="Benito J."/>
            <person name="Dominguez A."/>
            <person name="Revuelta J.L."/>
            <person name="Moreno S."/>
            <person name="Armstrong J."/>
            <person name="Forsburg S.L."/>
            <person name="Cerutti L."/>
            <person name="Lowe T."/>
            <person name="McCombie W.R."/>
            <person name="Paulsen I."/>
            <person name="Potashkin J."/>
            <person name="Shpakovski G.V."/>
            <person name="Ussery D."/>
            <person name="Barrell B.G."/>
            <person name="Nurse P."/>
        </authorList>
    </citation>
    <scope>NUCLEOTIDE SEQUENCE [LARGE SCALE GENOMIC DNA]</scope>
    <source>
        <strain>972 / ATCC 24843</strain>
    </source>
</reference>
<reference key="3">
    <citation type="journal article" date="2000" name="Genetics">
        <title>Autoregulated expression of Schizosaccharomyces pombe meiosis-specific transcription factor Mei4 and a genome-wide search for its target genes.</title>
        <authorList>
            <person name="Abe H."/>
            <person name="Shimoda C."/>
        </authorList>
    </citation>
    <scope>FUNCTION</scope>
</reference>
<protein>
    <recommendedName>
        <fullName>Sporulation protein kinase mde3</fullName>
        <ecNumber>2.7.11.1</ecNumber>
    </recommendedName>
    <alternativeName>
        <fullName>Mei4-dependent protein 3</fullName>
    </alternativeName>
</protein>